<keyword id="KW-0025">Alternative splicing</keyword>
<keyword id="KW-0256">Endoplasmic reticulum</keyword>
<keyword id="KW-1185">Reference proteome</keyword>
<keyword id="KW-0833">Ubl conjugation pathway</keyword>
<evidence type="ECO:0000250" key="1"/>
<evidence type="ECO:0000255" key="2">
    <source>
        <dbReference type="PROSITE-ProRule" id="PRU01182"/>
    </source>
</evidence>
<evidence type="ECO:0000303" key="3">
    <source>
    </source>
</evidence>
<evidence type="ECO:0000305" key="4"/>
<feature type="chain" id="PRO_0000238460" description="NPL4-like protein">
    <location>
        <begin position="1"/>
        <end position="415"/>
    </location>
</feature>
<feature type="domain" description="MPN" evidence="2">
    <location>
        <begin position="130"/>
        <end position="279"/>
    </location>
</feature>
<feature type="splice variant" id="VSP_018607" description="In isoform 2." evidence="3">
    <original>GPLSTGFPIENRGNPVAMS</original>
    <variation>VFLFFPTLLHSIMNLQFTK</variation>
    <location>
        <begin position="333"/>
        <end position="351"/>
    </location>
</feature>
<feature type="splice variant" id="VSP_018608" description="In isoform 2." evidence="3">
    <location>
        <begin position="352"/>
        <end position="415"/>
    </location>
</feature>
<feature type="sequence conflict" description="In Ref. 5; AK059266." evidence="4" ref="5">
    <original>E</original>
    <variation>G</variation>
    <location>
        <position position="306"/>
    </location>
</feature>
<proteinExistence type="evidence at transcript level"/>
<dbReference type="EMBL" id="AP002968">
    <property type="protein sequence ID" value="BAB39260.1"/>
    <property type="molecule type" value="Genomic_DNA"/>
</dbReference>
<dbReference type="EMBL" id="AP008207">
    <property type="protein sequence ID" value="BAF04998.1"/>
    <property type="molecule type" value="Genomic_DNA"/>
</dbReference>
<dbReference type="EMBL" id="AP014957">
    <property type="protein sequence ID" value="BAS72213.1"/>
    <property type="molecule type" value="Genomic_DNA"/>
</dbReference>
<dbReference type="EMBL" id="AP014957">
    <property type="protein sequence ID" value="BAS72214.1"/>
    <property type="molecule type" value="Genomic_DNA"/>
</dbReference>
<dbReference type="EMBL" id="AK059266">
    <property type="status" value="NOT_ANNOTATED_CDS"/>
    <property type="molecule type" value="mRNA"/>
</dbReference>
<dbReference type="EMBL" id="AK107503">
    <property type="status" value="NOT_ANNOTATED_CDS"/>
    <property type="molecule type" value="mRNA"/>
</dbReference>
<dbReference type="RefSeq" id="XP_015621888.1">
    <property type="nucleotide sequence ID" value="XM_015766402.1"/>
</dbReference>
<dbReference type="SMR" id="Q9AS33"/>
<dbReference type="FunCoup" id="Q9AS33">
    <property type="interactions" value="751"/>
</dbReference>
<dbReference type="STRING" id="39947.Q9AS33"/>
<dbReference type="iPTMnet" id="Q9AS33"/>
<dbReference type="PaxDb" id="39947-Q9AS33"/>
<dbReference type="EnsemblPlants" id="Os01t0377700-02">
    <molecule id="Q9AS33-1"/>
    <property type="protein sequence ID" value="Os01t0377700-02"/>
    <property type="gene ID" value="Os01g0377700"/>
</dbReference>
<dbReference type="Gramene" id="Os01t0377700-02">
    <molecule id="Q9AS33-1"/>
    <property type="protein sequence ID" value="Os01t0377700-02"/>
    <property type="gene ID" value="Os01g0377700"/>
</dbReference>
<dbReference type="KEGG" id="dosa:Os01g0377700"/>
<dbReference type="eggNOG" id="KOG2834">
    <property type="taxonomic scope" value="Eukaryota"/>
</dbReference>
<dbReference type="HOGENOM" id="CLU_052923_0_0_1"/>
<dbReference type="InParanoid" id="Q9AS33"/>
<dbReference type="OMA" id="DYTMSTA"/>
<dbReference type="OrthoDB" id="10251089at2759"/>
<dbReference type="UniPathway" id="UPA00144"/>
<dbReference type="Proteomes" id="UP000000763">
    <property type="component" value="Chromosome 1"/>
</dbReference>
<dbReference type="Proteomes" id="UP000059680">
    <property type="component" value="Chromosome 1"/>
</dbReference>
<dbReference type="GO" id="GO:0005783">
    <property type="term" value="C:endoplasmic reticulum"/>
    <property type="evidence" value="ECO:0007669"/>
    <property type="project" value="UniProtKB-SubCell"/>
</dbReference>
<dbReference type="GO" id="GO:0005634">
    <property type="term" value="C:nucleus"/>
    <property type="evidence" value="ECO:0000318"/>
    <property type="project" value="GO_Central"/>
</dbReference>
<dbReference type="GO" id="GO:0043130">
    <property type="term" value="F:ubiquitin binding"/>
    <property type="evidence" value="ECO:0000318"/>
    <property type="project" value="GO_Central"/>
</dbReference>
<dbReference type="GO" id="GO:0031625">
    <property type="term" value="F:ubiquitin protein ligase binding"/>
    <property type="evidence" value="ECO:0000318"/>
    <property type="project" value="GO_Central"/>
</dbReference>
<dbReference type="GO" id="GO:0043161">
    <property type="term" value="P:proteasome-mediated ubiquitin-dependent protein catabolic process"/>
    <property type="evidence" value="ECO:0007669"/>
    <property type="project" value="UniProtKB-UniPathway"/>
</dbReference>
<dbReference type="GO" id="GO:0006511">
    <property type="term" value="P:ubiquitin-dependent protein catabolic process"/>
    <property type="evidence" value="ECO:0000318"/>
    <property type="project" value="GO_Central"/>
</dbReference>
<dbReference type="CDD" id="cd08061">
    <property type="entry name" value="MPN_NPL4"/>
    <property type="match status" value="1"/>
</dbReference>
<dbReference type="CDD" id="cd17055">
    <property type="entry name" value="Ubl_AtNPL4_like"/>
    <property type="match status" value="1"/>
</dbReference>
<dbReference type="FunFam" id="3.10.20.90:FF:000330">
    <property type="entry name" value="NPL4-like protein 1"/>
    <property type="match status" value="1"/>
</dbReference>
<dbReference type="FunFam" id="3.40.140.10:FF:000080">
    <property type="entry name" value="NPL4-like protein 1"/>
    <property type="match status" value="1"/>
</dbReference>
<dbReference type="Gene3D" id="3.40.140.10">
    <property type="entry name" value="Cytidine Deaminase, domain 2"/>
    <property type="match status" value="1"/>
</dbReference>
<dbReference type="Gene3D" id="3.10.20.90">
    <property type="entry name" value="Phosphatidylinositol 3-kinase Catalytic Subunit, Chain A, domain 1"/>
    <property type="match status" value="1"/>
</dbReference>
<dbReference type="InterPro" id="IPR037518">
    <property type="entry name" value="MPN"/>
</dbReference>
<dbReference type="InterPro" id="IPR016563">
    <property type="entry name" value="Npl4"/>
</dbReference>
<dbReference type="InterPro" id="IPR007717">
    <property type="entry name" value="NPL4_C"/>
</dbReference>
<dbReference type="InterPro" id="IPR000626">
    <property type="entry name" value="Ubiquitin-like_dom"/>
</dbReference>
<dbReference type="InterPro" id="IPR029071">
    <property type="entry name" value="Ubiquitin-like_domsf"/>
</dbReference>
<dbReference type="PANTHER" id="PTHR12710">
    <property type="entry name" value="NUCLEAR PROTEIN LOCALIZATION 4"/>
    <property type="match status" value="1"/>
</dbReference>
<dbReference type="PANTHER" id="PTHR12710:SF0">
    <property type="entry name" value="NUCLEAR PROTEIN LOCALIZATION PROTEIN 4 HOMOLOG"/>
    <property type="match status" value="1"/>
</dbReference>
<dbReference type="Pfam" id="PF05021">
    <property type="entry name" value="NPL4"/>
    <property type="match status" value="1"/>
</dbReference>
<dbReference type="SUPFAM" id="SSF54236">
    <property type="entry name" value="Ubiquitin-like"/>
    <property type="match status" value="1"/>
</dbReference>
<dbReference type="PROSITE" id="PS50249">
    <property type="entry name" value="MPN"/>
    <property type="match status" value="1"/>
</dbReference>
<dbReference type="PROSITE" id="PS50053">
    <property type="entry name" value="UBIQUITIN_2"/>
    <property type="match status" value="1"/>
</dbReference>
<sequence>MILRIRSRDGTDRITVPDPAAATVGDLQRLIAARVTVPVPLQRLSLDPALLLPSSASAALLADPAAPLSSLRLSNGSFVYLSYPPDARSSQPPPPKALSAAGSFGKKMTMDDLIARQIRVTRQEAPLCAAASFDRDSANAFQLHVAESLAFATKRAGFLYGRVDADTKEVFVDFIYEPPQVGTEDVVQLMRDAQEEARVDAIAHGLGMRRVGLVFTQAVGRKTSDTGEYTMSNREVLQATELQAEGGIPEWVTAIVKLEVGDDGSGDVHFEAFQMSEICVKLFKDGVLETEIGDKDDPRLSKMRKEVVAGGKDTMEVDNDFFLVPVKISDHQGPLSTGFPIENRGNPVAMSALKSHLDRAKHLPFVKRISDFHLLLLVAAFLDIKADVPALTACVKNQSVVPEGYQLLIESLAGA</sequence>
<reference key="1">
    <citation type="journal article" date="2002" name="Nature">
        <title>The genome sequence and structure of rice chromosome 1.</title>
        <authorList>
            <person name="Sasaki T."/>
            <person name="Matsumoto T."/>
            <person name="Yamamoto K."/>
            <person name="Sakata K."/>
            <person name="Baba T."/>
            <person name="Katayose Y."/>
            <person name="Wu J."/>
            <person name="Niimura Y."/>
            <person name="Cheng Z."/>
            <person name="Nagamura Y."/>
            <person name="Antonio B.A."/>
            <person name="Kanamori H."/>
            <person name="Hosokawa S."/>
            <person name="Masukawa M."/>
            <person name="Arikawa K."/>
            <person name="Chiden Y."/>
            <person name="Hayashi M."/>
            <person name="Okamoto M."/>
            <person name="Ando T."/>
            <person name="Aoki H."/>
            <person name="Arita K."/>
            <person name="Hamada M."/>
            <person name="Harada C."/>
            <person name="Hijishita S."/>
            <person name="Honda M."/>
            <person name="Ichikawa Y."/>
            <person name="Idonuma A."/>
            <person name="Iijima M."/>
            <person name="Ikeda M."/>
            <person name="Ikeno M."/>
            <person name="Ito S."/>
            <person name="Ito T."/>
            <person name="Ito Y."/>
            <person name="Ito Y."/>
            <person name="Iwabuchi A."/>
            <person name="Kamiya K."/>
            <person name="Karasawa W."/>
            <person name="Katagiri S."/>
            <person name="Kikuta A."/>
            <person name="Kobayashi N."/>
            <person name="Kono I."/>
            <person name="Machita K."/>
            <person name="Maehara T."/>
            <person name="Mizuno H."/>
            <person name="Mizubayashi T."/>
            <person name="Mukai Y."/>
            <person name="Nagasaki H."/>
            <person name="Nakashima M."/>
            <person name="Nakama Y."/>
            <person name="Nakamichi Y."/>
            <person name="Nakamura M."/>
            <person name="Namiki N."/>
            <person name="Negishi M."/>
            <person name="Ohta I."/>
            <person name="Ono N."/>
            <person name="Saji S."/>
            <person name="Sakai K."/>
            <person name="Shibata M."/>
            <person name="Shimokawa T."/>
            <person name="Shomura A."/>
            <person name="Song J."/>
            <person name="Takazaki Y."/>
            <person name="Terasawa K."/>
            <person name="Tsuji K."/>
            <person name="Waki K."/>
            <person name="Yamagata H."/>
            <person name="Yamane H."/>
            <person name="Yoshiki S."/>
            <person name="Yoshihara R."/>
            <person name="Yukawa K."/>
            <person name="Zhong H."/>
            <person name="Iwama H."/>
            <person name="Endo T."/>
            <person name="Ito H."/>
            <person name="Hahn J.H."/>
            <person name="Kim H.-I."/>
            <person name="Eun M.-Y."/>
            <person name="Yano M."/>
            <person name="Jiang J."/>
            <person name="Gojobori T."/>
        </authorList>
    </citation>
    <scope>NUCLEOTIDE SEQUENCE [LARGE SCALE GENOMIC DNA]</scope>
    <source>
        <strain>cv. Nipponbare</strain>
    </source>
</reference>
<reference key="2">
    <citation type="journal article" date="2005" name="Nature">
        <title>The map-based sequence of the rice genome.</title>
        <authorList>
            <consortium name="International rice genome sequencing project (IRGSP)"/>
        </authorList>
    </citation>
    <scope>NUCLEOTIDE SEQUENCE [LARGE SCALE GENOMIC DNA]</scope>
    <source>
        <strain>cv. Nipponbare</strain>
    </source>
</reference>
<reference key="3">
    <citation type="journal article" date="2008" name="Nucleic Acids Res.">
        <title>The rice annotation project database (RAP-DB): 2008 update.</title>
        <authorList>
            <consortium name="The rice annotation project (RAP)"/>
        </authorList>
    </citation>
    <scope>GENOME REANNOTATION</scope>
    <source>
        <strain>cv. Nipponbare</strain>
    </source>
</reference>
<reference key="4">
    <citation type="journal article" date="2013" name="Rice">
        <title>Improvement of the Oryza sativa Nipponbare reference genome using next generation sequence and optical map data.</title>
        <authorList>
            <person name="Kawahara Y."/>
            <person name="de la Bastide M."/>
            <person name="Hamilton J.P."/>
            <person name="Kanamori H."/>
            <person name="McCombie W.R."/>
            <person name="Ouyang S."/>
            <person name="Schwartz D.C."/>
            <person name="Tanaka T."/>
            <person name="Wu J."/>
            <person name="Zhou S."/>
            <person name="Childs K.L."/>
            <person name="Davidson R.M."/>
            <person name="Lin H."/>
            <person name="Quesada-Ocampo L."/>
            <person name="Vaillancourt B."/>
            <person name="Sakai H."/>
            <person name="Lee S.S."/>
            <person name="Kim J."/>
            <person name="Numa H."/>
            <person name="Itoh T."/>
            <person name="Buell C.R."/>
            <person name="Matsumoto T."/>
        </authorList>
    </citation>
    <scope>GENOME REANNOTATION</scope>
    <source>
        <strain>cv. Nipponbare</strain>
    </source>
</reference>
<reference key="5">
    <citation type="journal article" date="2003" name="Science">
        <title>Collection, mapping, and annotation of over 28,000 cDNA clones from japonica rice.</title>
        <authorList>
            <consortium name="The rice full-length cDNA consortium"/>
        </authorList>
    </citation>
    <scope>NUCLEOTIDE SEQUENCE [LARGE SCALE MRNA] (ISOFORMS 1 AND 2)</scope>
    <source>
        <strain>cv. Nipponbare</strain>
    </source>
</reference>
<gene>
    <name type="ordered locus">Os01g0377700</name>
    <name type="ordered locus">LOC_Os01g27990</name>
    <name type="ORF">P0416G11.21-1</name>
</gene>
<accession>Q9AS33</accession>
<accession>Q0JMN0</accession>
<name>NPL4_ORYSJ</name>
<organism>
    <name type="scientific">Oryza sativa subsp. japonica</name>
    <name type="common">Rice</name>
    <dbReference type="NCBI Taxonomy" id="39947"/>
    <lineage>
        <taxon>Eukaryota</taxon>
        <taxon>Viridiplantae</taxon>
        <taxon>Streptophyta</taxon>
        <taxon>Embryophyta</taxon>
        <taxon>Tracheophyta</taxon>
        <taxon>Spermatophyta</taxon>
        <taxon>Magnoliopsida</taxon>
        <taxon>Liliopsida</taxon>
        <taxon>Poales</taxon>
        <taxon>Poaceae</taxon>
        <taxon>BOP clade</taxon>
        <taxon>Oryzoideae</taxon>
        <taxon>Oryzeae</taxon>
        <taxon>Oryzinae</taxon>
        <taxon>Oryza</taxon>
        <taxon>Oryza sativa</taxon>
    </lineage>
</organism>
<comment type="function">
    <text evidence="1">May be part of a complex that binds ubiquitinated proteins and that is necessary for the export of misfolded proteins from the ER to the cytoplasm, where they are degraded by the proteasome.</text>
</comment>
<comment type="pathway">
    <text>Protein degradation; proteasomal ubiquitin-dependent pathway.</text>
</comment>
<comment type="subcellular location">
    <subcellularLocation>
        <location evidence="4">Endoplasmic reticulum</location>
    </subcellularLocation>
</comment>
<comment type="alternative products">
    <event type="alternative splicing"/>
    <isoform>
        <id>Q9AS33-1</id>
        <name>1</name>
        <sequence type="displayed"/>
    </isoform>
    <isoform>
        <id>Q9AS33-2</id>
        <name>2</name>
        <sequence type="described" ref="VSP_018607 VSP_018608"/>
    </isoform>
</comment>
<comment type="similarity">
    <text evidence="4">Belongs to the NPL4 family.</text>
</comment>
<protein>
    <recommendedName>
        <fullName>NPL4-like protein</fullName>
    </recommendedName>
</protein>